<proteinExistence type="evidence at protein level"/>
<gene>
    <name evidence="3" type="primary">apsD</name>
    <name evidence="5" type="ORF">BgramDRAFT_5562</name>
</gene>
<protein>
    <recommendedName>
        <fullName evidence="3">D-apiose dehydrogenase</fullName>
        <ecNumber evidence="2">1.1.1.420</ecNumber>
    </recommendedName>
</protein>
<reference key="1">
    <citation type="submission" date="2008-03" db="EMBL/GenBank/DDBJ databases">
        <title>Sequencing of the draft genome and assembly of Burkholderia graminis C4D1M.</title>
        <authorList>
            <consortium name="US DOE Joint Genome Institute (JGI-PGF)"/>
            <person name="Copeland A."/>
            <person name="Lucas S."/>
            <person name="Lapidus A."/>
            <person name="Glavina del Rio T."/>
            <person name="Dalin E."/>
            <person name="Tice H."/>
            <person name="Bruce D."/>
            <person name="Goodwin L."/>
            <person name="Pitluck S."/>
            <person name="Larimer F."/>
            <person name="Land M.L."/>
            <person name="Hauser L."/>
            <person name="Tiedje J."/>
            <person name="Richardson P."/>
        </authorList>
    </citation>
    <scope>NUCLEOTIDE SEQUENCE [LARGE SCALE GENOMIC DNA]</scope>
    <source>
        <strain>ATCC 700544 / DSM 17151 / LMG 18924 / NCIMB 13744 / C4D1M</strain>
    </source>
</reference>
<reference key="2">
    <citation type="journal article" date="2018" name="Nat. Chem. Biol.">
        <title>Functional assignment of multiple catabolic pathways for D-apiose.</title>
        <authorList>
            <person name="Carter M.S."/>
            <person name="Zhang X."/>
            <person name="Huang H."/>
            <person name="Bouvier J.T."/>
            <person name="Francisco B.S."/>
            <person name="Vetting M.W."/>
            <person name="Al-Obaidi N."/>
            <person name="Bonanno J.B."/>
            <person name="Ghosh A."/>
            <person name="Zallot R.G."/>
            <person name="Andersen H.M."/>
            <person name="Almo S.C."/>
            <person name="Gerlt J.A."/>
        </authorList>
    </citation>
    <scope>FUNCTION</scope>
    <scope>CATALYTIC ACTIVITY</scope>
    <scope>BIOPHYSICOCHEMICAL PROPERTIES</scope>
    <scope>PATHWAY</scope>
</reference>
<dbReference type="EC" id="1.1.1.420" evidence="2"/>
<dbReference type="EMBL" id="ABLD01000025">
    <property type="protein sequence ID" value="EDT07593.1"/>
    <property type="molecule type" value="Genomic_DNA"/>
</dbReference>
<dbReference type="RefSeq" id="WP_006052131.1">
    <property type="nucleotide sequence ID" value="NZ_ABLD01000025.1"/>
</dbReference>
<dbReference type="SMR" id="B1G894"/>
<dbReference type="SABIO-RK" id="B1G894"/>
<dbReference type="Proteomes" id="UP000005045">
    <property type="component" value="Unassembled WGS sequence"/>
</dbReference>
<dbReference type="GO" id="GO:0046872">
    <property type="term" value="F:metal ion binding"/>
    <property type="evidence" value="ECO:0007669"/>
    <property type="project" value="UniProtKB-KW"/>
</dbReference>
<dbReference type="GO" id="GO:0000166">
    <property type="term" value="F:nucleotide binding"/>
    <property type="evidence" value="ECO:0007669"/>
    <property type="project" value="UniProtKB-KW"/>
</dbReference>
<dbReference type="GO" id="GO:0016491">
    <property type="term" value="F:oxidoreductase activity"/>
    <property type="evidence" value="ECO:0007669"/>
    <property type="project" value="UniProtKB-KW"/>
</dbReference>
<dbReference type="Gene3D" id="3.30.360.10">
    <property type="entry name" value="Dihydrodipicolinate Reductase, domain 2"/>
    <property type="match status" value="1"/>
</dbReference>
<dbReference type="Gene3D" id="3.40.50.720">
    <property type="entry name" value="NAD(P)-binding Rossmann-like Domain"/>
    <property type="match status" value="1"/>
</dbReference>
<dbReference type="InterPro" id="IPR000683">
    <property type="entry name" value="Gfo/Idh/MocA-like_OxRdtase_N"/>
</dbReference>
<dbReference type="InterPro" id="IPR051317">
    <property type="entry name" value="Gfo/Idh/MocA_oxidoreduct"/>
</dbReference>
<dbReference type="InterPro" id="IPR055170">
    <property type="entry name" value="GFO_IDH_MocA-like_dom"/>
</dbReference>
<dbReference type="InterPro" id="IPR036291">
    <property type="entry name" value="NAD(P)-bd_dom_sf"/>
</dbReference>
<dbReference type="PANTHER" id="PTHR43708">
    <property type="entry name" value="CONSERVED EXPRESSED OXIDOREDUCTASE (EUROFUNG)"/>
    <property type="match status" value="1"/>
</dbReference>
<dbReference type="PANTHER" id="PTHR43708:SF8">
    <property type="entry name" value="OXIDOREDUCTASE"/>
    <property type="match status" value="1"/>
</dbReference>
<dbReference type="Pfam" id="PF01408">
    <property type="entry name" value="GFO_IDH_MocA"/>
    <property type="match status" value="1"/>
</dbReference>
<dbReference type="Pfam" id="PF22725">
    <property type="entry name" value="GFO_IDH_MocA_C3"/>
    <property type="match status" value="1"/>
</dbReference>
<dbReference type="SUPFAM" id="SSF55347">
    <property type="entry name" value="Glyceraldehyde-3-phosphate dehydrogenase-like, C-terminal domain"/>
    <property type="match status" value="1"/>
</dbReference>
<dbReference type="SUPFAM" id="SSF51735">
    <property type="entry name" value="NAD(P)-binding Rossmann-fold domains"/>
    <property type="match status" value="1"/>
</dbReference>
<organism>
    <name type="scientific">Paraburkholderia graminis (strain ATCC 700544 / DSM 17151 / LMG 18924 / NCIMB 13744 / C4D1M)</name>
    <dbReference type="NCBI Taxonomy" id="396598"/>
    <lineage>
        <taxon>Bacteria</taxon>
        <taxon>Pseudomonadati</taxon>
        <taxon>Pseudomonadota</taxon>
        <taxon>Betaproteobacteria</taxon>
        <taxon>Burkholderiales</taxon>
        <taxon>Burkholderiaceae</taxon>
        <taxon>Paraburkholderia</taxon>
    </lineage>
</organism>
<accession>B1G894</accession>
<feature type="chain" id="PRO_0000446034" description="D-apiose dehydrogenase">
    <location>
        <begin position="1"/>
        <end position="375"/>
    </location>
</feature>
<feature type="binding site" evidence="1">
    <location>
        <begin position="29"/>
        <end position="30"/>
    </location>
    <ligand>
        <name>NAD(+)</name>
        <dbReference type="ChEBI" id="CHEBI:57540"/>
    </ligand>
</feature>
<feature type="binding site" evidence="1">
    <location>
        <position position="38"/>
    </location>
    <ligand>
        <name>Mg(2+)</name>
        <dbReference type="ChEBI" id="CHEBI:18420"/>
    </ligand>
</feature>
<feature type="binding site" evidence="1">
    <location>
        <position position="39"/>
    </location>
    <ligand>
        <name>Mg(2+)</name>
        <dbReference type="ChEBI" id="CHEBI:18420"/>
    </ligand>
</feature>
<feature type="binding site" evidence="1">
    <location>
        <position position="41"/>
    </location>
    <ligand>
        <name>Mg(2+)</name>
        <dbReference type="ChEBI" id="CHEBI:18420"/>
    </ligand>
</feature>
<feature type="binding site" evidence="1">
    <location>
        <position position="44"/>
    </location>
    <ligand>
        <name>Mg(2+)</name>
        <dbReference type="ChEBI" id="CHEBI:18420"/>
    </ligand>
</feature>
<feature type="binding site" evidence="1">
    <location>
        <position position="51"/>
    </location>
    <ligand>
        <name>NAD(+)</name>
        <dbReference type="ChEBI" id="CHEBI:57540"/>
    </ligand>
</feature>
<feature type="binding site" evidence="1">
    <location>
        <position position="93"/>
    </location>
    <ligand>
        <name>NAD(+)</name>
        <dbReference type="ChEBI" id="CHEBI:57540"/>
    </ligand>
</feature>
<feature type="binding site" evidence="1">
    <location>
        <begin position="111"/>
        <end position="112"/>
    </location>
    <ligand>
        <name>NAD(+)</name>
        <dbReference type="ChEBI" id="CHEBI:57540"/>
    </ligand>
</feature>
<feature type="binding site" evidence="1">
    <location>
        <position position="112"/>
    </location>
    <ligand>
        <name>substrate</name>
    </ligand>
</feature>
<feature type="binding site" evidence="1">
    <location>
        <position position="140"/>
    </location>
    <ligand>
        <name>NAD(+)</name>
        <dbReference type="ChEBI" id="CHEBI:57540"/>
    </ligand>
</feature>
<feature type="binding site" evidence="1">
    <location>
        <begin position="179"/>
        <end position="181"/>
    </location>
    <ligand>
        <name>NAD(+)</name>
        <dbReference type="ChEBI" id="CHEBI:57540"/>
    </ligand>
</feature>
<feature type="binding site" evidence="1">
    <location>
        <position position="179"/>
    </location>
    <ligand>
        <name>substrate</name>
    </ligand>
</feature>
<feature type="binding site" evidence="1">
    <location>
        <position position="192"/>
    </location>
    <ligand>
        <name>substrate</name>
    </ligand>
</feature>
<feature type="binding site" evidence="1">
    <location>
        <position position="196"/>
    </location>
    <ligand>
        <name>substrate</name>
    </ligand>
</feature>
<feature type="binding site" evidence="1">
    <location>
        <position position="246"/>
    </location>
    <ligand>
        <name>substrate</name>
    </ligand>
</feature>
<sequence>MSATDATQVISATTTTVKRFKGALIGCGFFSRNHLHAWRDIDGAEIVALCDADSERLRAAGQAFGIERLYRDAAAMLSAEQLDFVDIATTAPSHRSLVELAAQAGVAAICQKPFALTLADARAMVAACERAGVPLMVHENFRWQPAIQAVGRALRDGAIGTPFWGRVSFRSAFDVFSGQPYLARNERFIVEDLGIHILDIARFLFGDVTRLAAATSRVNSAIAGEDVATILLTHESGVTSVVDCSYASRQARELFPQTLVEVDGAEGTLRLSADYRLEIHNRDGTRTATAAPPPLAWASVPWEAIQASVVNIQRHWIACLRNGGEPQTSGRDNLKTLALVEATYLSAREGRTVELKSLEAEAPAVTSTSSGAVRR</sequence>
<comment type="function">
    <text evidence="2">Involved in catabolism of D-apiose. Catalyzes oxidation of D-apiose to D-apionolactone.</text>
</comment>
<comment type="catalytic activity">
    <reaction evidence="2">
        <text>D-apiofuranose + NAD(+) = D-apionolactone + NADH + H(+)</text>
        <dbReference type="Rhea" id="RHEA:57056"/>
        <dbReference type="ChEBI" id="CHEBI:15378"/>
        <dbReference type="ChEBI" id="CHEBI:57540"/>
        <dbReference type="ChEBI" id="CHEBI:57945"/>
        <dbReference type="ChEBI" id="CHEBI:141215"/>
        <dbReference type="ChEBI" id="CHEBI:141216"/>
        <dbReference type="EC" id="1.1.1.420"/>
    </reaction>
</comment>
<comment type="biophysicochemical properties">
    <kinetics>
        <KM evidence="2">0.11 mM for D-apiose</KM>
        <text evidence="2">kcat is 12 sec(-1).</text>
    </kinetics>
</comment>
<comment type="pathway">
    <text evidence="2">Carbohydrate metabolism.</text>
</comment>
<comment type="similarity">
    <text evidence="4">Belongs to the Gfo/Idh/MocA family.</text>
</comment>
<keyword id="KW-0119">Carbohydrate metabolism</keyword>
<keyword id="KW-0460">Magnesium</keyword>
<keyword id="KW-0479">Metal-binding</keyword>
<keyword id="KW-0520">NAD</keyword>
<keyword id="KW-0547">Nucleotide-binding</keyword>
<keyword id="KW-0560">Oxidoreductase</keyword>
<keyword id="KW-1185">Reference proteome</keyword>
<evidence type="ECO:0000250" key="1">
    <source>
        <dbReference type="UniProtKB" id="B9JK80"/>
    </source>
</evidence>
<evidence type="ECO:0000269" key="2">
    <source>
    </source>
</evidence>
<evidence type="ECO:0000303" key="3">
    <source>
    </source>
</evidence>
<evidence type="ECO:0000305" key="4"/>
<evidence type="ECO:0000312" key="5">
    <source>
        <dbReference type="EMBL" id="EDT07593.1"/>
    </source>
</evidence>
<name>APSD_PARG4</name>